<feature type="signal peptide" evidence="3">
    <location>
        <begin position="1"/>
        <end position="21"/>
    </location>
</feature>
<feature type="chain" id="PRO_0000233346" description="Thyrotropin receptor">
    <location>
        <begin position="22"/>
        <end position="763"/>
    </location>
</feature>
<feature type="topological domain" description="Extracellular" evidence="3">
    <location>
        <begin position="22"/>
        <end position="412"/>
    </location>
</feature>
<feature type="transmembrane region" description="Helical; Name=1" evidence="3">
    <location>
        <begin position="413"/>
        <end position="440"/>
    </location>
</feature>
<feature type="topological domain" description="Cytoplasmic" evidence="3">
    <location>
        <begin position="441"/>
        <end position="449"/>
    </location>
</feature>
<feature type="transmembrane region" description="Helical; Name=2" evidence="3">
    <location>
        <begin position="450"/>
        <end position="472"/>
    </location>
</feature>
<feature type="topological domain" description="Extracellular" evidence="3">
    <location>
        <begin position="473"/>
        <end position="493"/>
    </location>
</feature>
<feature type="transmembrane region" description="Helical; Name=3" evidence="3">
    <location>
        <begin position="494"/>
        <end position="516"/>
    </location>
</feature>
<feature type="topological domain" description="Cytoplasmic" evidence="3">
    <location>
        <begin position="517"/>
        <end position="536"/>
    </location>
</feature>
<feature type="transmembrane region" description="Helical; Name=4" evidence="3">
    <location>
        <begin position="537"/>
        <end position="559"/>
    </location>
</feature>
<feature type="topological domain" description="Extracellular" evidence="3">
    <location>
        <begin position="560"/>
        <end position="579"/>
    </location>
</feature>
<feature type="transmembrane region" description="Helical; Name=5" evidence="3">
    <location>
        <begin position="580"/>
        <end position="601"/>
    </location>
</feature>
<feature type="topological domain" description="Cytoplasmic" evidence="3">
    <location>
        <begin position="602"/>
        <end position="624"/>
    </location>
</feature>
<feature type="transmembrane region" description="Helical; Name=6" evidence="3">
    <location>
        <begin position="625"/>
        <end position="648"/>
    </location>
</feature>
<feature type="topological domain" description="Extracellular" evidence="3">
    <location>
        <begin position="649"/>
        <end position="659"/>
    </location>
</feature>
<feature type="transmembrane region" description="Helical; Name=7" evidence="3">
    <location>
        <begin position="660"/>
        <end position="681"/>
    </location>
</feature>
<feature type="topological domain" description="Cytoplasmic" evidence="3">
    <location>
        <begin position="682"/>
        <end position="763"/>
    </location>
</feature>
<feature type="repeat" description="LRR 1">
    <location>
        <begin position="100"/>
        <end position="124"/>
    </location>
</feature>
<feature type="repeat" description="LRR 2">
    <location>
        <begin position="125"/>
        <end position="150"/>
    </location>
</feature>
<feature type="repeat" description="LRR 3">
    <location>
        <begin position="151"/>
        <end position="174"/>
    </location>
</feature>
<feature type="repeat" description="LRR 4">
    <location>
        <begin position="176"/>
        <end position="199"/>
    </location>
</feature>
<feature type="repeat" description="LRR 5">
    <location>
        <begin position="201"/>
        <end position="223"/>
    </location>
</feature>
<feature type="repeat" description="LRR 6">
    <location>
        <begin position="225"/>
        <end position="248"/>
    </location>
</feature>
<feature type="repeat" description="LRR 7">
    <location>
        <begin position="264"/>
        <end position="288"/>
    </location>
</feature>
<feature type="short sequence motif" description="PDZ-binding">
    <location>
        <begin position="761"/>
        <end position="763"/>
    </location>
</feature>
<feature type="modified residue" description="Sulfotyrosine" evidence="1">
    <location>
        <position position="384"/>
    </location>
</feature>
<feature type="glycosylation site" description="N-linked (GlcNAc...) asparagine" evidence="3">
    <location>
        <position position="77"/>
    </location>
</feature>
<feature type="glycosylation site" description="N-linked (GlcNAc...) asparagine" evidence="3">
    <location>
        <position position="99"/>
    </location>
</feature>
<feature type="glycosylation site" description="N-linked (GlcNAc...) asparagine" evidence="3">
    <location>
        <position position="177"/>
    </location>
</feature>
<feature type="glycosylation site" description="N-linked (GlcNAc...) asparagine" evidence="3">
    <location>
        <position position="198"/>
    </location>
</feature>
<feature type="glycosylation site" description="N-linked (GlcNAc...) asparagine" evidence="3">
    <location>
        <position position="302"/>
    </location>
</feature>
<feature type="disulfide bond" evidence="4">
    <location>
        <begin position="31"/>
        <end position="41"/>
    </location>
</feature>
<feature type="disulfide bond" evidence="4">
    <location>
        <begin position="493"/>
        <end position="568"/>
    </location>
</feature>
<evidence type="ECO:0000250" key="1">
    <source>
        <dbReference type="UniProtKB" id="P16473"/>
    </source>
</evidence>
<evidence type="ECO:0000250" key="2">
    <source>
        <dbReference type="UniProtKB" id="P21463"/>
    </source>
</evidence>
<evidence type="ECO:0000255" key="3"/>
<evidence type="ECO:0000255" key="4">
    <source>
        <dbReference type="PROSITE-ProRule" id="PRU00521"/>
    </source>
</evidence>
<protein>
    <recommendedName>
        <fullName>Thyrotropin receptor</fullName>
    </recommendedName>
    <alternativeName>
        <fullName>Thyroid-stimulating hormone receptor</fullName>
        <shortName>TSH-R</shortName>
    </alternativeName>
</protein>
<comment type="function">
    <text evidence="1 2">Receptor for the thyroid-stimulating hormone (TSH) or thyrotropin. Also acts as a receptor for the heterodimeric glycoprotein hormone (GPHA2:GPHB5) or thyrostimulin. The activity of this receptor is mediated by G proteins which activate adenylate cyclase. Plays a central role in controlling thyroid cell metabolism.</text>
</comment>
<comment type="subunit">
    <text evidence="1">Interacts with heterodimer GPHA2:GPHB5; this interaction stimulates cAMP production. Interacts (via the PDZ-binding motif) with SCRIB; regulates TSHR trafficking and function.</text>
</comment>
<comment type="subcellular location">
    <subcellularLocation>
        <location evidence="1">Cell membrane</location>
        <topology evidence="1">Multi-pass membrane protein</topology>
    </subcellularLocation>
    <subcellularLocation>
        <location evidence="1">Basolateral cell membrane</location>
        <topology evidence="1">Multi-pass membrane protein</topology>
    </subcellularLocation>
</comment>
<comment type="PTM">
    <text evidence="1">Glycosylated.</text>
</comment>
<comment type="PTM">
    <text evidence="1">Sulfated. Sulfation on Tyr-384 plays a role in thyrotropin receptor binding and activation.</text>
</comment>
<comment type="similarity">
    <text evidence="4">Belongs to the G-protein coupled receptor 1 family. FSH/LSH/TSH subfamily.</text>
</comment>
<name>TSHR_FELCA</name>
<keyword id="KW-1003">Cell membrane</keyword>
<keyword id="KW-1015">Disulfide bond</keyword>
<keyword id="KW-0297">G-protein coupled receptor</keyword>
<keyword id="KW-0325">Glycoprotein</keyword>
<keyword id="KW-0433">Leucine-rich repeat</keyword>
<keyword id="KW-0472">Membrane</keyword>
<keyword id="KW-0675">Receptor</keyword>
<keyword id="KW-1185">Reference proteome</keyword>
<keyword id="KW-0677">Repeat</keyword>
<keyword id="KW-0732">Signal</keyword>
<keyword id="KW-0765">Sulfation</keyword>
<keyword id="KW-0807">Transducer</keyword>
<keyword id="KW-0812">Transmembrane</keyword>
<keyword id="KW-1133">Transmembrane helix</keyword>
<accession>Q9BGN4</accession>
<gene>
    <name type="primary">TSHR</name>
</gene>
<proteinExistence type="evidence at transcript level"/>
<dbReference type="EMBL" id="AF218264">
    <property type="protein sequence ID" value="AAK00133.1"/>
    <property type="molecule type" value="mRNA"/>
</dbReference>
<dbReference type="RefSeq" id="NP_001009288.1">
    <property type="nucleotide sequence ID" value="NM_001009288.1"/>
</dbReference>
<dbReference type="SMR" id="Q9BGN4"/>
<dbReference type="FunCoup" id="Q9BGN4">
    <property type="interactions" value="15"/>
</dbReference>
<dbReference type="STRING" id="9685.ENSFCAP00000028614"/>
<dbReference type="GlyCosmos" id="Q9BGN4">
    <property type="glycosylation" value="5 sites, No reported glycans"/>
</dbReference>
<dbReference type="PaxDb" id="9685-ENSFCAP00000010296"/>
<dbReference type="GeneID" id="493842"/>
<dbReference type="KEGG" id="fca:493842"/>
<dbReference type="CTD" id="7253"/>
<dbReference type="eggNOG" id="KOG2087">
    <property type="taxonomic scope" value="Eukaryota"/>
</dbReference>
<dbReference type="InParanoid" id="Q9BGN4"/>
<dbReference type="OrthoDB" id="5981530at2759"/>
<dbReference type="Proteomes" id="UP000011712">
    <property type="component" value="Unplaced"/>
</dbReference>
<dbReference type="GO" id="GO:0016323">
    <property type="term" value="C:basolateral plasma membrane"/>
    <property type="evidence" value="ECO:0000250"/>
    <property type="project" value="UniProtKB"/>
</dbReference>
<dbReference type="GO" id="GO:0005886">
    <property type="term" value="C:plasma membrane"/>
    <property type="evidence" value="ECO:0000250"/>
    <property type="project" value="UniProtKB"/>
</dbReference>
<dbReference type="GO" id="GO:0008528">
    <property type="term" value="F:G protein-coupled peptide receptor activity"/>
    <property type="evidence" value="ECO:0000318"/>
    <property type="project" value="GO_Central"/>
</dbReference>
<dbReference type="GO" id="GO:0044877">
    <property type="term" value="F:protein-containing complex binding"/>
    <property type="evidence" value="ECO:0000250"/>
    <property type="project" value="UniProtKB"/>
</dbReference>
<dbReference type="GO" id="GO:0038023">
    <property type="term" value="F:signaling receptor activity"/>
    <property type="evidence" value="ECO:0000250"/>
    <property type="project" value="UniProtKB"/>
</dbReference>
<dbReference type="GO" id="GO:0004996">
    <property type="term" value="F:thyroid-stimulating hormone receptor activity"/>
    <property type="evidence" value="ECO:0000250"/>
    <property type="project" value="UniProtKB"/>
</dbReference>
<dbReference type="GO" id="GO:0007189">
    <property type="term" value="P:adenylate cyclase-activating G protein-coupled receptor signaling pathway"/>
    <property type="evidence" value="ECO:0000250"/>
    <property type="project" value="UniProtKB"/>
</dbReference>
<dbReference type="GO" id="GO:0007166">
    <property type="term" value="P:cell surface receptor signaling pathway"/>
    <property type="evidence" value="ECO:0000250"/>
    <property type="project" value="UniProtKB"/>
</dbReference>
<dbReference type="GO" id="GO:1904588">
    <property type="term" value="P:cellular response to glycoprotein"/>
    <property type="evidence" value="ECO:0000250"/>
    <property type="project" value="UniProtKB"/>
</dbReference>
<dbReference type="GO" id="GO:1905229">
    <property type="term" value="P:cellular response to thyrotropin-releasing hormone"/>
    <property type="evidence" value="ECO:0000250"/>
    <property type="project" value="UniProtKB"/>
</dbReference>
<dbReference type="GO" id="GO:0009755">
    <property type="term" value="P:hormone-mediated signaling pathway"/>
    <property type="evidence" value="ECO:0000318"/>
    <property type="project" value="GO_Central"/>
</dbReference>
<dbReference type="GO" id="GO:0038194">
    <property type="term" value="P:thyroid-stimulating hormone signaling pathway"/>
    <property type="evidence" value="ECO:0000250"/>
    <property type="project" value="UniProtKB"/>
</dbReference>
<dbReference type="CDD" id="cd15964">
    <property type="entry name" value="7tmA_TSH-R"/>
    <property type="match status" value="1"/>
</dbReference>
<dbReference type="FunFam" id="1.20.1070.10:FF:000019">
    <property type="entry name" value="Lutropin-choriogonadotropic hormone receptor"/>
    <property type="match status" value="1"/>
</dbReference>
<dbReference type="FunFam" id="3.80.10.10:FF:000176">
    <property type="entry name" value="Thyrotropin receptor"/>
    <property type="match status" value="1"/>
</dbReference>
<dbReference type="Gene3D" id="1.20.1070.10">
    <property type="entry name" value="Rhodopsin 7-helix transmembrane proteins"/>
    <property type="match status" value="1"/>
</dbReference>
<dbReference type="Gene3D" id="3.80.10.10">
    <property type="entry name" value="Ribonuclease Inhibitor"/>
    <property type="match status" value="1"/>
</dbReference>
<dbReference type="InterPro" id="IPR000276">
    <property type="entry name" value="GPCR_Rhodpsn"/>
</dbReference>
<dbReference type="InterPro" id="IPR017452">
    <property type="entry name" value="GPCR_Rhodpsn_7TM"/>
</dbReference>
<dbReference type="InterPro" id="IPR002131">
    <property type="entry name" value="Gphrmn_rcpt_fam"/>
</dbReference>
<dbReference type="InterPro" id="IPR026906">
    <property type="entry name" value="LRR_5"/>
</dbReference>
<dbReference type="InterPro" id="IPR032675">
    <property type="entry name" value="LRR_dom_sf"/>
</dbReference>
<dbReference type="InterPro" id="IPR002274">
    <property type="entry name" value="TSH_rcpt"/>
</dbReference>
<dbReference type="PANTHER" id="PTHR24372">
    <property type="entry name" value="GLYCOPROTEIN HORMONE RECEPTOR"/>
    <property type="match status" value="1"/>
</dbReference>
<dbReference type="PANTHER" id="PTHR24372:SF0">
    <property type="entry name" value="THYROTROPIN RECEPTOR"/>
    <property type="match status" value="1"/>
</dbReference>
<dbReference type="Pfam" id="PF00001">
    <property type="entry name" value="7tm_1"/>
    <property type="match status" value="1"/>
</dbReference>
<dbReference type="Pfam" id="PF13306">
    <property type="entry name" value="LRR_5"/>
    <property type="match status" value="2"/>
</dbReference>
<dbReference type="PRINTS" id="PR00373">
    <property type="entry name" value="GLYCHORMONER"/>
</dbReference>
<dbReference type="PRINTS" id="PR00237">
    <property type="entry name" value="GPCRRHODOPSN"/>
</dbReference>
<dbReference type="PRINTS" id="PR01145">
    <property type="entry name" value="TSHRECEPTOR"/>
</dbReference>
<dbReference type="SUPFAM" id="SSF81321">
    <property type="entry name" value="Family A G protein-coupled receptor-like"/>
    <property type="match status" value="1"/>
</dbReference>
<dbReference type="SUPFAM" id="SSF52058">
    <property type="entry name" value="L domain-like"/>
    <property type="match status" value="1"/>
</dbReference>
<dbReference type="PROSITE" id="PS00237">
    <property type="entry name" value="G_PROTEIN_RECEP_F1_1"/>
    <property type="match status" value="1"/>
</dbReference>
<dbReference type="PROSITE" id="PS50262">
    <property type="entry name" value="G_PROTEIN_RECEP_F1_2"/>
    <property type="match status" value="1"/>
</dbReference>
<sequence length="763" mass="86588">MRQTPLLQLALLLSLPRSLGGKGCPSPPCECHQEDDFRVTCKDIHRIPSLPPSTQTLKFIETHLKTIPSRAFSNLPNISRIYLSIDATLQRLESHSFYNLSKMTHIEIRNTRSLTYIDPGALKELPLLKFLGIFNTGLGVFPDLTKVYSTDVFFILEITDNPYMTSIPANAFQGLCNETLTLKLYNNGFTSIQGHAFNGTKLDAVYLNKNKYLTAIDQDAFGGVYSGPTLLDVSYTSVTALPSKGLEHLKELIARNTWTLKKLPLTLSFLHLTRADLSYPSHCCAFKNQKKIRGILESFMCNDSSIRSLRQRKSVNALNGPFDQEYEEYLGDSHAGYKDNSKFQDTRSNSHYYVFFEEQDEILGFGQELKNPQEETLQAFDSHYDYTVCGGNEDMVCTPKSDEFNPCEDIMGYKFLRIVVWFVSLLALLGNVFVLIILLTSHYKLTVPRFLMCNLAFADFCMGMYLLLIASVDLYTHSEYYNHAIDWQTGPGCNAAGFFTVFASELSVYTLTVITLERWYAITFAMRLDRKMRLRHAYAIMVGGWVCCFLLALLPLVGISSYAKVSICLPMDTETPLALAYIILVLLLNIVAFIIVCSCYVKIYITVRNPQYNTGDKDTKIAKRMAVLIFTDFMCMAPISFYALSALMNKPLITVTNSKILLVLFYPLNSCANPFLYAIFTKTFQRDVFILLSKFGICKRQAQAYRGQRVSPKNSTGIQVQKVTRNMRQSLPNMQDDYELLENSHLTPNKQSHISKEYNQTVL</sequence>
<reference key="1">
    <citation type="journal article" date="2002" name="Endocrinology">
        <title>Cloning of the cat TSH receptor and evidence against an autoimmune etiology of feline hyperthyroidism.</title>
        <authorList>
            <person name="Nguyen L.Q."/>
            <person name="Arseven O.K."/>
            <person name="Gerber H."/>
            <person name="Stein B.S."/>
            <person name="Jameson J.L."/>
            <person name="Kopp P."/>
        </authorList>
    </citation>
    <scope>NUCLEOTIDE SEQUENCE [MRNA]</scope>
</reference>
<organism>
    <name type="scientific">Felis catus</name>
    <name type="common">Cat</name>
    <name type="synonym">Felis silvestris catus</name>
    <dbReference type="NCBI Taxonomy" id="9685"/>
    <lineage>
        <taxon>Eukaryota</taxon>
        <taxon>Metazoa</taxon>
        <taxon>Chordata</taxon>
        <taxon>Craniata</taxon>
        <taxon>Vertebrata</taxon>
        <taxon>Euteleostomi</taxon>
        <taxon>Mammalia</taxon>
        <taxon>Eutheria</taxon>
        <taxon>Laurasiatheria</taxon>
        <taxon>Carnivora</taxon>
        <taxon>Feliformia</taxon>
        <taxon>Felidae</taxon>
        <taxon>Felinae</taxon>
        <taxon>Felis</taxon>
    </lineage>
</organism>